<sequence>MATDGASCEPDLSRAPEDAAGAAAEAAKKEFDVDTLSKSELRMLLSVMEGELEARDLVIEALRARRKEVFIQERYGRFNLNDPFLALQRDYEAGAGDKEKKPVCTNPLSILEAVMAHCKKMQERMSAQLAAAESRQKKLEMEKLQLQALEQEHKKLAARLEEERGKNKQVVLMLVKECKQLSGKVIEEAQKLEDVMAKLEEEKKKTNELEEELSTEKRRSTEMEAQMEKQLSEFDTEREQLRAKLNREEAHTTDLKEEIDKMKKMIEQLKRGSDSKPSLSLPRKTKDRRLVSISVGTEGTVTRSVACQTDLVTESADYMKKLPLTMPVKPSTGSPLVSANAKGSVCTSATMARPGIDRQASHGDLIGASVPAFPPPSANKIEENGPSTGSTPDPTSSTPPLPSNAAPPTAQTPGIAPQNSQAPPMHSLHSPCANTSLHPGLNPRIQAARFRFQGNANDPDQNGNTTQSPPSRDVSPTSRDNLVAKQLARNTVTQALSRFTSPQAGAPSRPGVPPTGDVGTHPPVGRTSLKTHAVARVDRGNPPPIPPKKPGLSQTPSPPHPQLKVIIDSSRASNTGAKVDNKTVASPPSSLPQGNRVINEENLPKSSSPQLPPKPSIDLTVAPAGCAVSALATSQVGAWPAATPGLSQPACSDSSLVIPTTIAFCSSINPVSASSCRPGASDSLLVTASGWSPSLTPLLMSGGPAPLAGRPTLLQQAAAQGNVTLLSMLLNEEGLDINYSCEDGHSALYSAAKNGHTDCVRLLLSAEAQVNAADKNGFTPLCAAAAQGHFECVELLIAYDANINHAADGGQTPLYLACKNGNKECVKLLLEAGTNRSVKTTDGWTPVHAAVDTGNVDSLKLLMYHRIPARGNSFNEEESESSVFDLDGGEDSPEGISKPVIPADLINHANREGWTAAHIAASKGFKNCLEILCRHRGLEPERRDKCNRTVHDVATDDCKHLLENLNALKIPLRISVGEIEPSNYGSDDLECENTICALNIRKQTSWDDFSKAVSQALTNHFQAISSDGWWSLEDVTCNNTTDSNIGLSARSIRSITLGNVLWSVGQSFVQSPWDFMRKNKAEHITVLLSGPLEGCLSSVTYASMIPLQMMQNYLRLVEQYHNVIFHGPEGSLQDYIVHQLALCLKHRQMAAGFSCEIVRAEVDARFSKEQLLDLFISSACLIPVKQSPSKKKIIIILENLEKSSLSELLRDFLAPLENRSTESPCTFQKGNGISECYYFHENCFLMGTIAKACLQGSDLLVQQHFRWVQLRWDGEPMQGLLQRFLRRKVVNKFKGQAPSPCDPVCKIVDWALSVWRQLNSCLARLGTPEALLGPKYFLSCPVVPGHAQVTVKWMSKLWNGVIAPRVQEAILSRASVKRQPGFGQTTAKRHPSQGQQAVIKAALSILLNKAVLHGCPLPRAELDQHTADFKGGSFPLSIVSSYNSCNKKKGESGAWRKVNTSPRRKSGRFSLPTWNKPDLSTEGMKNKTVSQLNCNRSASLSKQKSLENDLSLTLNLDQRLSLGSDDEADLVKELQSMCSSKSESDISKIADSRDDLRMFDSSGNNPVLSATINNLRMPVSQKEVSPLSSHQTTECSNSKSKTELGVSRVKSFLPVPRSKVTQCSQNTKRSSSSSNTRQIEINNNSKEENWNLHKNEHLEKPNK</sequence>
<gene>
    <name type="primary">CTTNBP2</name>
    <name type="synonym">CORTBP2</name>
</gene>
<feature type="chain" id="PRO_0000279862" description="Cortactin-binding protein 2">
    <location>
        <begin position="1"/>
        <end position="1663"/>
    </location>
</feature>
<feature type="repeat" description="ANK 1">
    <location>
        <begin position="709"/>
        <end position="739"/>
    </location>
</feature>
<feature type="repeat" description="ANK 2">
    <location>
        <begin position="743"/>
        <end position="772"/>
    </location>
</feature>
<feature type="repeat" description="ANK 3">
    <location>
        <begin position="776"/>
        <end position="805"/>
    </location>
</feature>
<feature type="repeat" description="ANK 4">
    <location>
        <begin position="809"/>
        <end position="838"/>
    </location>
</feature>
<feature type="repeat" description="ANK 5">
    <location>
        <begin position="842"/>
        <end position="871"/>
    </location>
</feature>
<feature type="repeat" description="ANK 6">
    <location>
        <begin position="912"/>
        <end position="942"/>
    </location>
</feature>
<feature type="region of interest" description="Disordered" evidence="5">
    <location>
        <begin position="1"/>
        <end position="23"/>
    </location>
</feature>
<feature type="region of interest" description="Disordered" evidence="5">
    <location>
        <begin position="203"/>
        <end position="222"/>
    </location>
</feature>
<feature type="region of interest" description="Disordered" evidence="5">
    <location>
        <begin position="359"/>
        <end position="440"/>
    </location>
</feature>
<feature type="region of interest" description="Disordered" evidence="5">
    <location>
        <begin position="454"/>
        <end position="478"/>
    </location>
</feature>
<feature type="region of interest" description="Disordered" evidence="5">
    <location>
        <begin position="498"/>
        <end position="617"/>
    </location>
</feature>
<feature type="region of interest" description="Disordered" evidence="5">
    <location>
        <begin position="1446"/>
        <end position="1485"/>
    </location>
</feature>
<feature type="region of interest" description="Disordered" evidence="5">
    <location>
        <begin position="1580"/>
        <end position="1663"/>
    </location>
</feature>
<feature type="coiled-coil region" evidence="4">
    <location>
        <begin position="119"/>
        <end position="276"/>
    </location>
</feature>
<feature type="compositionally biased region" description="Low complexity" evidence="5">
    <location>
        <begin position="386"/>
        <end position="396"/>
    </location>
</feature>
<feature type="compositionally biased region" description="Polar residues" evidence="5">
    <location>
        <begin position="583"/>
        <end position="593"/>
    </location>
</feature>
<feature type="compositionally biased region" description="Polar residues" evidence="5">
    <location>
        <begin position="1582"/>
        <end position="1599"/>
    </location>
</feature>
<feature type="compositionally biased region" description="Low complexity" evidence="5">
    <location>
        <begin position="1624"/>
        <end position="1638"/>
    </location>
</feature>
<feature type="compositionally biased region" description="Basic and acidic residues" evidence="5">
    <location>
        <begin position="1645"/>
        <end position="1663"/>
    </location>
</feature>
<feature type="modified residue" description="Asymmetric dimethylarginine" evidence="1">
    <location>
        <position position="498"/>
    </location>
</feature>
<feature type="modified residue" description="Phosphoserine" evidence="3">
    <location>
        <position position="1524"/>
    </location>
</feature>
<organism>
    <name type="scientific">Pongo abelii</name>
    <name type="common">Sumatran orangutan</name>
    <name type="synonym">Pongo pygmaeus abelii</name>
    <dbReference type="NCBI Taxonomy" id="9601"/>
    <lineage>
        <taxon>Eukaryota</taxon>
        <taxon>Metazoa</taxon>
        <taxon>Chordata</taxon>
        <taxon>Craniata</taxon>
        <taxon>Vertebrata</taxon>
        <taxon>Euteleostomi</taxon>
        <taxon>Mammalia</taxon>
        <taxon>Eutheria</taxon>
        <taxon>Euarchontoglires</taxon>
        <taxon>Primates</taxon>
        <taxon>Haplorrhini</taxon>
        <taxon>Catarrhini</taxon>
        <taxon>Hominidae</taxon>
        <taxon>Pongo</taxon>
    </lineage>
</organism>
<comment type="function">
    <text evidence="2">Regulates the dendritic spine distribution of CTTN/cortactin in hippocampal neurons, and thus controls dendritic spinogenesis and dendritic spine maintenance. Associates with the striatin-interacting phosphatase and kinase (STRIPAK) core complex to regulate dendritic spine distribution of the STRIPAK complex in hippocampal neurons.</text>
</comment>
<comment type="subunit">
    <text evidence="2">Interacts with CTTN/cortactin SH3 domain. Interacts with STRN, STRN4/zinedin and MOB4/phocein; this interactions mediate the association with the STRIPAK core complex and may regulate dendritic spine distribution of the STRIPAK complex in hippocampal neurons. Activation of glutamate receptors weakens the interaction with STRN and STRN4.</text>
</comment>
<comment type="subcellular location">
    <subcellularLocation>
        <location evidence="1">Cytoplasm</location>
        <location evidence="1">Cell cortex</location>
    </subcellularLocation>
    <subcellularLocation>
        <location evidence="2">Cell projection</location>
        <location evidence="2">Dendritic spine</location>
    </subcellularLocation>
    <text evidence="2">Remains associated with dendritic spines even after glutamate stimulation.</text>
</comment>
<proteinExistence type="inferred from homology"/>
<evidence type="ECO:0000250" key="1">
    <source>
        <dbReference type="UniProtKB" id="B9EJA2"/>
    </source>
</evidence>
<evidence type="ECO:0000250" key="2">
    <source>
        <dbReference type="UniProtKB" id="Q2IBD4"/>
    </source>
</evidence>
<evidence type="ECO:0000250" key="3">
    <source>
        <dbReference type="UniProtKB" id="Q8WZ74"/>
    </source>
</evidence>
<evidence type="ECO:0000255" key="4"/>
<evidence type="ECO:0000256" key="5">
    <source>
        <dbReference type="SAM" id="MobiDB-lite"/>
    </source>
</evidence>
<accession>Q2IBE6</accession>
<keyword id="KW-0040">ANK repeat</keyword>
<keyword id="KW-0966">Cell projection</keyword>
<keyword id="KW-0175">Coiled coil</keyword>
<keyword id="KW-0963">Cytoplasm</keyword>
<keyword id="KW-0488">Methylation</keyword>
<keyword id="KW-0597">Phosphoprotein</keyword>
<keyword id="KW-1185">Reference proteome</keyword>
<keyword id="KW-0677">Repeat</keyword>
<keyword id="KW-0770">Synapse</keyword>
<dbReference type="EMBL" id="DP000026">
    <property type="protein sequence ID" value="ABC87468.2"/>
    <property type="molecule type" value="Genomic_DNA"/>
</dbReference>
<dbReference type="RefSeq" id="NP_001162027.1">
    <property type="nucleotide sequence ID" value="NM_001168555.1"/>
</dbReference>
<dbReference type="SMR" id="Q2IBE6"/>
<dbReference type="FunCoup" id="Q2IBE6">
    <property type="interactions" value="109"/>
</dbReference>
<dbReference type="STRING" id="9601.ENSPPYP00000020119"/>
<dbReference type="GeneID" id="100137031"/>
<dbReference type="KEGG" id="pon:100137031"/>
<dbReference type="CTD" id="83992"/>
<dbReference type="eggNOG" id="ENOG502QWG2">
    <property type="taxonomic scope" value="Eukaryota"/>
</dbReference>
<dbReference type="HOGENOM" id="CLU_004926_0_0_1"/>
<dbReference type="InParanoid" id="Q2IBE6"/>
<dbReference type="OrthoDB" id="6021133at2759"/>
<dbReference type="TreeFam" id="TF325130"/>
<dbReference type="Proteomes" id="UP000001595">
    <property type="component" value="Chromosome 7"/>
</dbReference>
<dbReference type="GO" id="GO:0015629">
    <property type="term" value="C:actin cytoskeleton"/>
    <property type="evidence" value="ECO:0007669"/>
    <property type="project" value="TreeGrafter"/>
</dbReference>
<dbReference type="GO" id="GO:0005938">
    <property type="term" value="C:cell cortex"/>
    <property type="evidence" value="ECO:0007669"/>
    <property type="project" value="UniProtKB-SubCell"/>
</dbReference>
<dbReference type="GO" id="GO:0043197">
    <property type="term" value="C:dendritic spine"/>
    <property type="evidence" value="ECO:0000250"/>
    <property type="project" value="UniProtKB"/>
</dbReference>
<dbReference type="GO" id="GO:0090443">
    <property type="term" value="C:FAR/SIN/STRIPAK complex"/>
    <property type="evidence" value="ECO:0000250"/>
    <property type="project" value="UniProtKB"/>
</dbReference>
<dbReference type="GO" id="GO:0051721">
    <property type="term" value="F:protein phosphatase 2A binding"/>
    <property type="evidence" value="ECO:0007669"/>
    <property type="project" value="TreeGrafter"/>
</dbReference>
<dbReference type="Gene3D" id="1.25.40.20">
    <property type="entry name" value="Ankyrin repeat-containing domain"/>
    <property type="match status" value="1"/>
</dbReference>
<dbReference type="InterPro" id="IPR002110">
    <property type="entry name" value="Ankyrin_rpt"/>
</dbReference>
<dbReference type="InterPro" id="IPR036770">
    <property type="entry name" value="Ankyrin_rpt-contain_sf"/>
</dbReference>
<dbReference type="InterPro" id="IPR050719">
    <property type="entry name" value="Cortactin-Actin_Reg"/>
</dbReference>
<dbReference type="InterPro" id="IPR019131">
    <property type="entry name" value="Cortactin-binding_p2_N"/>
</dbReference>
<dbReference type="PANTHER" id="PTHR23166:SF9">
    <property type="entry name" value="CTTNBP2 N-TERMINAL-LIKE PROTEIN"/>
    <property type="match status" value="1"/>
</dbReference>
<dbReference type="PANTHER" id="PTHR23166">
    <property type="entry name" value="FILAMIN/GPBP-INTERACTING PROTEIN"/>
    <property type="match status" value="1"/>
</dbReference>
<dbReference type="Pfam" id="PF25408">
    <property type="entry name" value="AAA_lid_NAV1"/>
    <property type="match status" value="1"/>
</dbReference>
<dbReference type="Pfam" id="PF00023">
    <property type="entry name" value="Ank"/>
    <property type="match status" value="2"/>
</dbReference>
<dbReference type="Pfam" id="PF12796">
    <property type="entry name" value="Ank_2"/>
    <property type="match status" value="1"/>
</dbReference>
<dbReference type="Pfam" id="PF09727">
    <property type="entry name" value="CortBP2"/>
    <property type="match status" value="1"/>
</dbReference>
<dbReference type="SMART" id="SM00248">
    <property type="entry name" value="ANK"/>
    <property type="match status" value="6"/>
</dbReference>
<dbReference type="SUPFAM" id="SSF48403">
    <property type="entry name" value="Ankyrin repeat"/>
    <property type="match status" value="1"/>
</dbReference>
<dbReference type="PROSITE" id="PS50297">
    <property type="entry name" value="ANK_REP_REGION"/>
    <property type="match status" value="1"/>
</dbReference>
<dbReference type="PROSITE" id="PS50088">
    <property type="entry name" value="ANK_REPEAT"/>
    <property type="match status" value="4"/>
</dbReference>
<protein>
    <recommendedName>
        <fullName>Cortactin-binding protein 2</fullName>
        <shortName>CortBP2</shortName>
    </recommendedName>
</protein>
<reference key="1">
    <citation type="submission" date="2006-12" db="EMBL/GenBank/DDBJ databases">
        <title>NISC comparative sequencing initiative.</title>
        <authorList>
            <person name="Antonellis A."/>
            <person name="Ayele K."/>
            <person name="Benjamin B."/>
            <person name="Blakesley R.W."/>
            <person name="Boakye A."/>
            <person name="Bouffard G.G."/>
            <person name="Brinkley C."/>
            <person name="Brooks S."/>
            <person name="Chu G."/>
            <person name="Coleman H."/>
            <person name="Engle J."/>
            <person name="Gestole M."/>
            <person name="Greene A."/>
            <person name="Guan X."/>
            <person name="Gupta J."/>
            <person name="Haghighi P."/>
            <person name="Han J."/>
            <person name="Hansen N."/>
            <person name="Ho S.-L."/>
            <person name="Hu P."/>
            <person name="Hunter G."/>
            <person name="Hurle B."/>
            <person name="Idol J.R."/>
            <person name="Kwong P."/>
            <person name="Laric P."/>
            <person name="Larson S."/>
            <person name="Lee-Lin S.-Q."/>
            <person name="Legaspi R."/>
            <person name="Madden M."/>
            <person name="Maduro Q.L."/>
            <person name="Maduro V.B."/>
            <person name="Margulies E.H."/>
            <person name="Masiello C."/>
            <person name="Maskeri B."/>
            <person name="McDowell J."/>
            <person name="Mojidi H.A."/>
            <person name="Mullikin J.C."/>
            <person name="Oestreicher J.S."/>
            <person name="Park M."/>
            <person name="Portnoy M.E."/>
            <person name="Prasad A."/>
            <person name="Puri O."/>
            <person name="Reddix-Dugue N."/>
            <person name="Schandler K."/>
            <person name="Schueler M.G."/>
            <person name="Sison C."/>
            <person name="Stantripop S."/>
            <person name="Stephen E."/>
            <person name="Taye A."/>
            <person name="Thomas J.W."/>
            <person name="Thomas P.J."/>
            <person name="Tsipouri V."/>
            <person name="Ung L."/>
            <person name="Vogt J.L."/>
            <person name="Wetherby K.D."/>
            <person name="Young A."/>
            <person name="Green E.D."/>
        </authorList>
    </citation>
    <scope>NUCLEOTIDE SEQUENCE [LARGE SCALE GENOMIC DNA]</scope>
</reference>
<name>CTTB2_PONAB</name>